<sequence length="99" mass="11052">MMNMQNMMRQAQKLQKQMEQKQADLAASQFTGKSAQELVTVTFTGDKKLISIDYKEAVVDPEDIETLQDMTTQAINDALSQVDDATKKIMGAFAGKMPF</sequence>
<keyword id="KW-0963">Cytoplasm</keyword>
<keyword id="KW-0238">DNA-binding</keyword>
<feature type="chain" id="PRO_0000170443" description="Nucleoid-associated protein gbs1791">
    <location>
        <begin position="1"/>
        <end position="99"/>
    </location>
</feature>
<feature type="region of interest" description="Disordered" evidence="2">
    <location>
        <begin position="1"/>
        <end position="20"/>
    </location>
</feature>
<feature type="compositionally biased region" description="Low complexity" evidence="2">
    <location>
        <begin position="1"/>
        <end position="10"/>
    </location>
</feature>
<reference key="1">
    <citation type="journal article" date="2002" name="Mol. Microbiol.">
        <title>Genome sequence of Streptococcus agalactiae, a pathogen causing invasive neonatal disease.</title>
        <authorList>
            <person name="Glaser P."/>
            <person name="Rusniok C."/>
            <person name="Buchrieser C."/>
            <person name="Chevalier F."/>
            <person name="Frangeul L."/>
            <person name="Msadek T."/>
            <person name="Zouine M."/>
            <person name="Couve E."/>
            <person name="Lalioui L."/>
            <person name="Poyart C."/>
            <person name="Trieu-Cuot P."/>
            <person name="Kunst F."/>
        </authorList>
    </citation>
    <scope>NUCLEOTIDE SEQUENCE [LARGE SCALE GENOMIC DNA]</scope>
    <source>
        <strain>NEM316</strain>
    </source>
</reference>
<name>Y1791_STRA3</name>
<dbReference type="EMBL" id="AL766853">
    <property type="protein sequence ID" value="CAD47450.1"/>
    <property type="molecule type" value="Genomic_DNA"/>
</dbReference>
<dbReference type="RefSeq" id="WP_000981511.1">
    <property type="nucleotide sequence ID" value="NC_004368.1"/>
</dbReference>
<dbReference type="SMR" id="P67264"/>
<dbReference type="KEGG" id="san:gbs1791"/>
<dbReference type="eggNOG" id="COG0718">
    <property type="taxonomic scope" value="Bacteria"/>
</dbReference>
<dbReference type="HOGENOM" id="CLU_140930_1_1_9"/>
<dbReference type="Proteomes" id="UP000000823">
    <property type="component" value="Chromosome"/>
</dbReference>
<dbReference type="GO" id="GO:0043590">
    <property type="term" value="C:bacterial nucleoid"/>
    <property type="evidence" value="ECO:0007669"/>
    <property type="project" value="UniProtKB-UniRule"/>
</dbReference>
<dbReference type="GO" id="GO:0005829">
    <property type="term" value="C:cytosol"/>
    <property type="evidence" value="ECO:0007669"/>
    <property type="project" value="TreeGrafter"/>
</dbReference>
<dbReference type="GO" id="GO:0003677">
    <property type="term" value="F:DNA binding"/>
    <property type="evidence" value="ECO:0007669"/>
    <property type="project" value="UniProtKB-UniRule"/>
</dbReference>
<dbReference type="Gene3D" id="3.30.1310.10">
    <property type="entry name" value="Nucleoid-associated protein YbaB-like domain"/>
    <property type="match status" value="1"/>
</dbReference>
<dbReference type="HAMAP" id="MF_00274">
    <property type="entry name" value="DNA_YbaB_EbfC"/>
    <property type="match status" value="1"/>
</dbReference>
<dbReference type="InterPro" id="IPR036894">
    <property type="entry name" value="YbaB-like_sf"/>
</dbReference>
<dbReference type="InterPro" id="IPR004401">
    <property type="entry name" value="YbaB/EbfC"/>
</dbReference>
<dbReference type="NCBIfam" id="TIGR00103">
    <property type="entry name" value="DNA_YbaB_EbfC"/>
    <property type="match status" value="1"/>
</dbReference>
<dbReference type="PANTHER" id="PTHR33449">
    <property type="entry name" value="NUCLEOID-ASSOCIATED PROTEIN YBAB"/>
    <property type="match status" value="1"/>
</dbReference>
<dbReference type="PANTHER" id="PTHR33449:SF1">
    <property type="entry name" value="NUCLEOID-ASSOCIATED PROTEIN YBAB"/>
    <property type="match status" value="1"/>
</dbReference>
<dbReference type="Pfam" id="PF02575">
    <property type="entry name" value="YbaB_DNA_bd"/>
    <property type="match status" value="1"/>
</dbReference>
<dbReference type="PIRSF" id="PIRSF004555">
    <property type="entry name" value="UCP004555"/>
    <property type="match status" value="1"/>
</dbReference>
<dbReference type="SUPFAM" id="SSF82607">
    <property type="entry name" value="YbaB-like"/>
    <property type="match status" value="1"/>
</dbReference>
<accession>P67264</accession>
<accession>Q8DXU9</accession>
<accession>Q8E3G8</accession>
<organism>
    <name type="scientific">Streptococcus agalactiae serotype III (strain NEM316)</name>
    <dbReference type="NCBI Taxonomy" id="211110"/>
    <lineage>
        <taxon>Bacteria</taxon>
        <taxon>Bacillati</taxon>
        <taxon>Bacillota</taxon>
        <taxon>Bacilli</taxon>
        <taxon>Lactobacillales</taxon>
        <taxon>Streptococcaceae</taxon>
        <taxon>Streptococcus</taxon>
    </lineage>
</organism>
<comment type="function">
    <text evidence="1">Binds to DNA and alters its conformation. May be involved in regulation of gene expression, nucleoid organization and DNA protection.</text>
</comment>
<comment type="subunit">
    <text evidence="1">Homodimer.</text>
</comment>
<comment type="subcellular location">
    <subcellularLocation>
        <location evidence="1">Cytoplasm</location>
        <location evidence="1">Nucleoid</location>
    </subcellularLocation>
</comment>
<comment type="similarity">
    <text evidence="1">Belongs to the YbaB/EbfC family.</text>
</comment>
<gene>
    <name type="ordered locus">gbs1791</name>
</gene>
<evidence type="ECO:0000255" key="1">
    <source>
        <dbReference type="HAMAP-Rule" id="MF_00274"/>
    </source>
</evidence>
<evidence type="ECO:0000256" key="2">
    <source>
        <dbReference type="SAM" id="MobiDB-lite"/>
    </source>
</evidence>
<proteinExistence type="inferred from homology"/>
<protein>
    <recommendedName>
        <fullName evidence="1">Nucleoid-associated protein gbs1791</fullName>
    </recommendedName>
</protein>